<dbReference type="EMBL" id="CP000284">
    <property type="protein sequence ID" value="ABE49359.1"/>
    <property type="status" value="ALT_INIT"/>
    <property type="molecule type" value="Genomic_DNA"/>
</dbReference>
<dbReference type="EMBL" id="CP000284">
    <property type="protein sequence ID" value="ABE49215.1"/>
    <property type="status" value="ALT_INIT"/>
    <property type="molecule type" value="Genomic_DNA"/>
</dbReference>
<dbReference type="RefSeq" id="WP_048811867.1">
    <property type="nucleotide sequence ID" value="NC_007947.1"/>
</dbReference>
<dbReference type="STRING" id="265072.Mfla_0947"/>
<dbReference type="KEGG" id="mfa:Mfla_0947"/>
<dbReference type="KEGG" id="mfa:Mfla_1091"/>
<dbReference type="eggNOG" id="COG5487">
    <property type="taxonomic scope" value="Bacteria"/>
</dbReference>
<dbReference type="HOGENOM" id="CLU_187346_0_1_4"/>
<dbReference type="Proteomes" id="UP000002440">
    <property type="component" value="Chromosome"/>
</dbReference>
<dbReference type="GO" id="GO:0005886">
    <property type="term" value="C:plasma membrane"/>
    <property type="evidence" value="ECO:0007669"/>
    <property type="project" value="UniProtKB-SubCell"/>
</dbReference>
<dbReference type="HAMAP" id="MF_01361">
    <property type="entry name" value="UPF0391"/>
    <property type="match status" value="1"/>
</dbReference>
<dbReference type="InterPro" id="IPR009760">
    <property type="entry name" value="DUF1328"/>
</dbReference>
<dbReference type="NCBIfam" id="NF010226">
    <property type="entry name" value="PRK13682.1-1"/>
    <property type="match status" value="1"/>
</dbReference>
<dbReference type="NCBIfam" id="NF010229">
    <property type="entry name" value="PRK13682.1-4"/>
    <property type="match status" value="1"/>
</dbReference>
<dbReference type="Pfam" id="PF07043">
    <property type="entry name" value="DUF1328"/>
    <property type="match status" value="1"/>
</dbReference>
<dbReference type="PIRSF" id="PIRSF036466">
    <property type="entry name" value="UCP036466"/>
    <property type="match status" value="1"/>
</dbReference>
<keyword id="KW-1003">Cell membrane</keyword>
<keyword id="KW-0472">Membrane</keyword>
<keyword id="KW-1185">Reference proteome</keyword>
<keyword id="KW-0812">Transmembrane</keyword>
<keyword id="KW-1133">Transmembrane helix</keyword>
<reference key="1">
    <citation type="submission" date="2006-03" db="EMBL/GenBank/DDBJ databases">
        <title>Complete sequence of Methylobacillus flagellatus KT.</title>
        <authorList>
            <consortium name="US DOE Joint Genome Institute"/>
            <person name="Copeland A."/>
            <person name="Lucas S."/>
            <person name="Lapidus A."/>
            <person name="Barry K."/>
            <person name="Detter J.C."/>
            <person name="Glavina del Rio T."/>
            <person name="Hammon N."/>
            <person name="Israni S."/>
            <person name="Dalin E."/>
            <person name="Tice H."/>
            <person name="Pitluck S."/>
            <person name="Brettin T."/>
            <person name="Bruce D."/>
            <person name="Han C."/>
            <person name="Tapia R."/>
            <person name="Saunders E."/>
            <person name="Gilna P."/>
            <person name="Schmutz J."/>
            <person name="Larimer F."/>
            <person name="Land M."/>
            <person name="Kyrpides N."/>
            <person name="Anderson I."/>
            <person name="Richardson P."/>
        </authorList>
    </citation>
    <scope>NUCLEOTIDE SEQUENCE [LARGE SCALE GENOMIC DNA]</scope>
    <source>
        <strain>ATCC 51484 / DSM 6875 / VKM B-1610 / KT</strain>
    </source>
</reference>
<comment type="subcellular location">
    <subcellularLocation>
        <location evidence="1">Cell membrane</location>
        <topology evidence="1">Multi-pass membrane protein</topology>
    </subcellularLocation>
</comment>
<comment type="similarity">
    <text evidence="1">Belongs to the UPF0391 family.</text>
</comment>
<comment type="sequence caution" evidence="2">
    <conflict type="erroneous initiation">
        <sequence resource="EMBL-CDS" id="ABE49215"/>
    </conflict>
</comment>
<comment type="sequence caution" evidence="2">
    <conflict type="erroneous initiation">
        <sequence resource="EMBL-CDS" id="ABE49359"/>
    </conflict>
</comment>
<accession>Q1H2C8</accession>
<proteinExistence type="inferred from homology"/>
<name>Y947_METFK</name>
<gene>
    <name type="ordered locus">Mfla_0947</name>
</gene>
<gene>
    <name type="ordered locus">Mfla_1091</name>
</gene>
<organism>
    <name type="scientific">Methylobacillus flagellatus (strain ATCC 51484 / DSM 6875 / VKM B-1610 / KT)</name>
    <dbReference type="NCBI Taxonomy" id="265072"/>
    <lineage>
        <taxon>Bacteria</taxon>
        <taxon>Pseudomonadati</taxon>
        <taxon>Pseudomonadota</taxon>
        <taxon>Betaproteobacteria</taxon>
        <taxon>Nitrosomonadales</taxon>
        <taxon>Methylophilaceae</taxon>
        <taxon>Methylobacillus</taxon>
    </lineage>
</organism>
<sequence length="54" mass="5876">MLHYSVIFFVIALIAAFFGFSGIAAGAAEIAKILFFVFLIITIVSLVAGIFHKR</sequence>
<feature type="chain" id="PRO_0000256749" description="UPF0391 membrane protein Mfla_0947/Mfla_1091">
    <location>
        <begin position="1"/>
        <end position="54"/>
    </location>
</feature>
<feature type="transmembrane region" description="Helical" evidence="1">
    <location>
        <begin position="6"/>
        <end position="26"/>
    </location>
</feature>
<feature type="transmembrane region" description="Helical" evidence="1">
    <location>
        <begin position="30"/>
        <end position="50"/>
    </location>
</feature>
<evidence type="ECO:0000255" key="1">
    <source>
        <dbReference type="HAMAP-Rule" id="MF_01361"/>
    </source>
</evidence>
<evidence type="ECO:0000305" key="2"/>
<protein>
    <recommendedName>
        <fullName evidence="1">UPF0391 membrane protein Mfla_0947/Mfla_1091</fullName>
    </recommendedName>
</protein>